<name>UBA5_BOVIN</name>
<proteinExistence type="evidence at transcript level"/>
<dbReference type="EMBL" id="BC151254">
    <property type="protein sequence ID" value="AAI51255.1"/>
    <property type="molecule type" value="mRNA"/>
</dbReference>
<dbReference type="RefSeq" id="NP_001094537.1">
    <property type="nucleotide sequence ID" value="NM_001101067.2"/>
</dbReference>
<dbReference type="SMR" id="A7MAZ3"/>
<dbReference type="FunCoup" id="A7MAZ3">
    <property type="interactions" value="4394"/>
</dbReference>
<dbReference type="STRING" id="9913.ENSBTAP00000005894"/>
<dbReference type="PaxDb" id="9913-ENSBTAP00000005894"/>
<dbReference type="PeptideAtlas" id="A7MAZ3"/>
<dbReference type="GeneID" id="509292"/>
<dbReference type="KEGG" id="bta:509292"/>
<dbReference type="CTD" id="79876"/>
<dbReference type="VEuPathDB" id="HostDB:ENSBTAG00000004495"/>
<dbReference type="eggNOG" id="KOG2336">
    <property type="taxonomic scope" value="Eukaryota"/>
</dbReference>
<dbReference type="HOGENOM" id="CLU_013325_0_1_1"/>
<dbReference type="InParanoid" id="A7MAZ3"/>
<dbReference type="OMA" id="MNIVKDY"/>
<dbReference type="OrthoDB" id="206053at2759"/>
<dbReference type="TreeFam" id="TF314168"/>
<dbReference type="Reactome" id="R-BTA-983168">
    <property type="pathway name" value="Antigen processing: Ubiquitination &amp; Proteasome degradation"/>
</dbReference>
<dbReference type="Proteomes" id="UP000009136">
    <property type="component" value="Chromosome 1"/>
</dbReference>
<dbReference type="Bgee" id="ENSBTAG00000004495">
    <property type="expression patterns" value="Expressed in caput epididymis and 104 other cell types or tissues"/>
</dbReference>
<dbReference type="GO" id="GO:0005737">
    <property type="term" value="C:cytoplasm"/>
    <property type="evidence" value="ECO:0000250"/>
    <property type="project" value="UniProtKB"/>
</dbReference>
<dbReference type="GO" id="GO:0005829">
    <property type="term" value="C:cytosol"/>
    <property type="evidence" value="ECO:0000318"/>
    <property type="project" value="GO_Central"/>
</dbReference>
<dbReference type="GO" id="GO:0005789">
    <property type="term" value="C:endoplasmic reticulum membrane"/>
    <property type="evidence" value="ECO:0000250"/>
    <property type="project" value="UniProtKB"/>
</dbReference>
<dbReference type="GO" id="GO:0005794">
    <property type="term" value="C:Golgi apparatus"/>
    <property type="evidence" value="ECO:0007669"/>
    <property type="project" value="UniProtKB-SubCell"/>
</dbReference>
<dbReference type="GO" id="GO:0005634">
    <property type="term" value="C:nucleus"/>
    <property type="evidence" value="ECO:0007669"/>
    <property type="project" value="UniProtKB-SubCell"/>
</dbReference>
<dbReference type="GO" id="GO:0005524">
    <property type="term" value="F:ATP binding"/>
    <property type="evidence" value="ECO:0007669"/>
    <property type="project" value="UniProtKB-KW"/>
</dbReference>
<dbReference type="GO" id="GO:0042803">
    <property type="term" value="F:protein homodimerization activity"/>
    <property type="evidence" value="ECO:0000250"/>
    <property type="project" value="UniProtKB"/>
</dbReference>
<dbReference type="GO" id="GO:0071566">
    <property type="term" value="F:UFM1 activating enzyme activity"/>
    <property type="evidence" value="ECO:0000250"/>
    <property type="project" value="UniProtKB"/>
</dbReference>
<dbReference type="GO" id="GO:0008270">
    <property type="term" value="F:zinc ion binding"/>
    <property type="evidence" value="ECO:0000250"/>
    <property type="project" value="UniProtKB"/>
</dbReference>
<dbReference type="GO" id="GO:0030218">
    <property type="term" value="P:erythrocyte differentiation"/>
    <property type="evidence" value="ECO:0000250"/>
    <property type="project" value="UniProtKB"/>
</dbReference>
<dbReference type="GO" id="GO:0030219">
    <property type="term" value="P:megakaryocyte differentiation"/>
    <property type="evidence" value="ECO:0000250"/>
    <property type="project" value="UniProtKB"/>
</dbReference>
<dbReference type="GO" id="GO:1990592">
    <property type="term" value="P:protein K69-linked ufmylation"/>
    <property type="evidence" value="ECO:0000250"/>
    <property type="project" value="UniProtKB"/>
</dbReference>
<dbReference type="GO" id="GO:0071569">
    <property type="term" value="P:protein ufmylation"/>
    <property type="evidence" value="ECO:0000250"/>
    <property type="project" value="UniProtKB"/>
</dbReference>
<dbReference type="GO" id="GO:0033146">
    <property type="term" value="P:regulation of intracellular estrogen receptor signaling pathway"/>
    <property type="evidence" value="ECO:0000250"/>
    <property type="project" value="UniProtKB"/>
</dbReference>
<dbReference type="GO" id="GO:0034976">
    <property type="term" value="P:response to endoplasmic reticulum stress"/>
    <property type="evidence" value="ECO:0000250"/>
    <property type="project" value="UniProtKB"/>
</dbReference>
<dbReference type="GO" id="GO:0061709">
    <property type="term" value="P:reticulophagy"/>
    <property type="evidence" value="ECO:0000250"/>
    <property type="project" value="UniProtKB"/>
</dbReference>
<dbReference type="CDD" id="cd00757">
    <property type="entry name" value="ThiF_MoeB_HesA_family"/>
    <property type="match status" value="1"/>
</dbReference>
<dbReference type="FunFam" id="3.40.50.720:FF:000066">
    <property type="entry name" value="Putative ubiquitin-like modifier-activating enzyme 5"/>
    <property type="match status" value="1"/>
</dbReference>
<dbReference type="Gene3D" id="3.40.50.720">
    <property type="entry name" value="NAD(P)-binding Rossmann-like Domain"/>
    <property type="match status" value="1"/>
</dbReference>
<dbReference type="InterPro" id="IPR029752">
    <property type="entry name" value="D-isomer_DH_CS1"/>
</dbReference>
<dbReference type="InterPro" id="IPR045886">
    <property type="entry name" value="ThiF/MoeB/HesA"/>
</dbReference>
<dbReference type="InterPro" id="IPR000594">
    <property type="entry name" value="ThiF_NAD_FAD-bd"/>
</dbReference>
<dbReference type="InterPro" id="IPR035985">
    <property type="entry name" value="Ubiquitin-activating_enz"/>
</dbReference>
<dbReference type="PANTHER" id="PTHR10953">
    <property type="entry name" value="UBIQUITIN-ACTIVATING ENZYME E1"/>
    <property type="match status" value="1"/>
</dbReference>
<dbReference type="PANTHER" id="PTHR10953:SF9">
    <property type="entry name" value="UBIQUITIN-LIKE MODIFIER-ACTIVATING ENZYME 5"/>
    <property type="match status" value="1"/>
</dbReference>
<dbReference type="Pfam" id="PF00899">
    <property type="entry name" value="ThiF"/>
    <property type="match status" value="1"/>
</dbReference>
<dbReference type="SUPFAM" id="SSF69572">
    <property type="entry name" value="Activating enzymes of the ubiquitin-like proteins"/>
    <property type="match status" value="1"/>
</dbReference>
<gene>
    <name evidence="2" type="primary">UBA5</name>
</gene>
<reference key="1">
    <citation type="submission" date="2007-07" db="EMBL/GenBank/DDBJ databases">
        <authorList>
            <consortium name="NIH - Mammalian Gene Collection (MGC) project"/>
        </authorList>
    </citation>
    <scope>NUCLEOTIDE SEQUENCE [LARGE SCALE MRNA]</scope>
    <source>
        <strain>Hereford</strain>
        <tissue>Hypothalamus</tissue>
    </source>
</reference>
<keyword id="KW-0067">ATP-binding</keyword>
<keyword id="KW-0963">Cytoplasm</keyword>
<keyword id="KW-0256">Endoplasmic reticulum</keyword>
<keyword id="KW-0333">Golgi apparatus</keyword>
<keyword id="KW-0472">Membrane</keyword>
<keyword id="KW-0479">Metal-binding</keyword>
<keyword id="KW-0547">Nucleotide-binding</keyword>
<keyword id="KW-0539">Nucleus</keyword>
<keyword id="KW-0597">Phosphoprotein</keyword>
<keyword id="KW-1185">Reference proteome</keyword>
<keyword id="KW-0833">Ubl conjugation pathway</keyword>
<keyword id="KW-0862">Zinc</keyword>
<organism>
    <name type="scientific">Bos taurus</name>
    <name type="common">Bovine</name>
    <dbReference type="NCBI Taxonomy" id="9913"/>
    <lineage>
        <taxon>Eukaryota</taxon>
        <taxon>Metazoa</taxon>
        <taxon>Chordata</taxon>
        <taxon>Craniata</taxon>
        <taxon>Vertebrata</taxon>
        <taxon>Euteleostomi</taxon>
        <taxon>Mammalia</taxon>
        <taxon>Eutheria</taxon>
        <taxon>Laurasiatheria</taxon>
        <taxon>Artiodactyla</taxon>
        <taxon>Ruminantia</taxon>
        <taxon>Pecora</taxon>
        <taxon>Bovidae</taxon>
        <taxon>Bovinae</taxon>
        <taxon>Bos</taxon>
    </lineage>
</organism>
<comment type="function">
    <text evidence="1 2">E1-like enzyme which specifically catalyzes the first step in ufmylation. Activates UFM1 by first adenylating its C-terminal glycine residue with ATP, and thereafter linking this residue to the side chain of a cysteine residue in E1, yielding a UFM1-E1 thioester and free AMP. Activates UFM1 via a trans-binding mechanism, in which UFM1 interacts with distinct sites in both subunits of the UBA5 homodimer. Trans-binding also promotes stabilization of the UBA5 homodimer, and enhances ATP-binding. Transfer of UFM1 from UBA5 to the E2-like enzyme UFC1 also takes place using a trans mechanism. Ufmylation plays a key role in various processes, such as ribosome recycling, response to DNA damage, interferon response or reticulophagy (also called ER-phagy) (By similarity). Ufmylation is essential for erythroid differentiation of both megakaryocytes and erythrocytes (By similarity).</text>
</comment>
<comment type="subunit">
    <text evidence="2">Homodimer; homodimerization is required for UFM1 activation. Interacts (via UIS motif) with UFM1; binds UFM1 via a trans-binding mechanism in which UFM1 interacts with distinct sites in both subunits of the UBA5 homodimer. Interacts (via C-terminus) with UFC1. Interacts (via UIS motif) with GABARAPL2 and, with lower affinity, with GABARAP and GABARAPL1.</text>
</comment>
<comment type="subcellular location">
    <subcellularLocation>
        <location evidence="2">Cytoplasm</location>
    </subcellularLocation>
    <subcellularLocation>
        <location evidence="2">Nucleus</location>
    </subcellularLocation>
    <subcellularLocation>
        <location evidence="2">Endoplasmic reticulum membrane</location>
    </subcellularLocation>
    <subcellularLocation>
        <location evidence="2">Golgi apparatus</location>
    </subcellularLocation>
    <text evidence="2">Localizes mainly in the cytoplasm, while it localizes to the nucleus in presence of SUMO2. Interaction with GABARAPL2 promotes localization to the endoplasmic reticulum membrane.</text>
</comment>
<comment type="domain">
    <text evidence="2">The UFC1-binding sequence (UFC) motif mediates interaction with UFC1.</text>
</comment>
<comment type="domain">
    <text evidence="2">The linker region is required to activate the active site of UFC1: it region moves next to active site of UFC1 to reduce the amount of water molecules in the vicinity of UFC1's active site and thereby elevate the nucleophilic activity of UFC1 active site.</text>
</comment>
<comment type="domain">
    <text evidence="2">The UFM1-interacting sequence (UIS) motif mediates interaction with both UFM1 and LC3/GABARAP proteins (GABARAP, GABARAPL1 and GABARAPL2).</text>
</comment>
<comment type="similarity">
    <text evidence="3">Belongs to the ubiquitin-activating E1 family. UBA5 subfamily.</text>
</comment>
<sequence>MAESVERLQQRVEELERELAQERSRRALGSGDGGGGRARIEKMSSEVVDSNPYSRLMALKRMGIVSDYEKIRTFTVAIVGVGGVGSVTAEMLTRCGIGKLLLFDYDKVELANMNRLFFQPHQAGLSKVQAAEHTLRNINPDVLFEVHNYNITTVENFEHFMNRISNGGLEEGKPVDLVLSCVDNFEARMTINTACNELGQTWMESGVSENAVSGHIQLIIPGESACFACAPPLVVAANIDEKTLKREGVCAASLPTTMGVVAGILVQNVLKFLLNFGTVSFYLGYNAMQDFFPTMSMKPNPQCDDRNCRKQQKEYKKKVAALPKQEVIQEEGEIIHEDNEWGIELVSEISEEELKKSSGPIPDLPEGIIVAYTVPQKQEDSVPEVTVEDSGESLEDLMAKMKNI</sequence>
<evidence type="ECO:0000250" key="1">
    <source>
        <dbReference type="UniProtKB" id="Q8VE47"/>
    </source>
</evidence>
<evidence type="ECO:0000250" key="2">
    <source>
        <dbReference type="UniProtKB" id="Q9GZZ9"/>
    </source>
</evidence>
<evidence type="ECO:0000305" key="3"/>
<protein>
    <recommendedName>
        <fullName evidence="3">Ubiquitin-like modifier-activating enzyme 5</fullName>
        <shortName evidence="2">Ubiquitin-activating enzyme 5</shortName>
    </recommendedName>
    <alternativeName>
        <fullName evidence="3">UFM1-activating enzyme</fullName>
    </alternativeName>
</protein>
<feature type="chain" id="PRO_0000391931" description="Ubiquitin-like modifier-activating enzyme 5">
    <location>
        <begin position="1"/>
        <end position="404"/>
    </location>
</feature>
<feature type="region of interest" description="Linker" evidence="2">
    <location>
        <begin position="347"/>
        <end position="377"/>
    </location>
</feature>
<feature type="short sequence motif" description="UFM1-interacting sequence (UIS)" evidence="2">
    <location>
        <begin position="334"/>
        <end position="346"/>
    </location>
</feature>
<feature type="short sequence motif" description="UFC1-binding sequence (UFC)" evidence="2">
    <location>
        <begin position="389"/>
        <end position="404"/>
    </location>
</feature>
<feature type="active site" description="Glycyl thioester intermediate" evidence="2">
    <location>
        <position position="250"/>
    </location>
</feature>
<feature type="binding site" evidence="2">
    <location>
        <position position="83"/>
    </location>
    <ligand>
        <name>ATP</name>
        <dbReference type="ChEBI" id="CHEBI:30616"/>
    </ligand>
</feature>
<feature type="binding site" evidence="2">
    <location>
        <position position="104"/>
    </location>
    <ligand>
        <name>ATP</name>
        <dbReference type="ChEBI" id="CHEBI:30616"/>
    </ligand>
</feature>
<feature type="binding site" evidence="2">
    <location>
        <position position="127"/>
    </location>
    <ligand>
        <name>ATP</name>
        <dbReference type="ChEBI" id="CHEBI:30616"/>
    </ligand>
</feature>
<feature type="binding site" evidence="2">
    <location>
        <position position="150"/>
    </location>
    <ligand>
        <name>ATP</name>
        <dbReference type="ChEBI" id="CHEBI:30616"/>
    </ligand>
</feature>
<feature type="binding site" evidence="2">
    <location>
        <position position="184"/>
    </location>
    <ligand>
        <name>ATP</name>
        <dbReference type="ChEBI" id="CHEBI:30616"/>
    </ligand>
</feature>
<feature type="binding site" evidence="2">
    <location>
        <position position="226"/>
    </location>
    <ligand>
        <name>Zn(2+)</name>
        <dbReference type="ChEBI" id="CHEBI:29105"/>
    </ligand>
</feature>
<feature type="binding site" evidence="2">
    <location>
        <position position="229"/>
    </location>
    <ligand>
        <name>Zn(2+)</name>
        <dbReference type="ChEBI" id="CHEBI:29105"/>
    </ligand>
</feature>
<feature type="binding site" evidence="2">
    <location>
        <position position="303"/>
    </location>
    <ligand>
        <name>Zn(2+)</name>
        <dbReference type="ChEBI" id="CHEBI:29105"/>
    </ligand>
</feature>
<feature type="binding site" evidence="2">
    <location>
        <position position="308"/>
    </location>
    <ligand>
        <name>Zn(2+)</name>
        <dbReference type="ChEBI" id="CHEBI:29105"/>
    </ligand>
</feature>
<feature type="modified residue" description="Phosphoserine" evidence="2">
    <location>
        <position position="45"/>
    </location>
</feature>
<feature type="modified residue" description="Phosphoserine" evidence="2">
    <location>
        <position position="358"/>
    </location>
</feature>
<feature type="modified residue" description="Phosphoserine" evidence="1">
    <location>
        <position position="393"/>
    </location>
</feature>
<accession>A7MAZ3</accession>